<reference key="1">
    <citation type="journal article" date="1993" name="Development">
        <title>Isolation and characterisation of murine homologues of the Drosophila seven in absentia gene (sina).</title>
        <authorList>
            <person name="Della N.G."/>
            <person name="Senior P.V."/>
            <person name="Bowtell D.D.L."/>
        </authorList>
    </citation>
    <scope>NUCLEOTIDE SEQUENCE [MRNA]</scope>
    <scope>TISSUE SPECIFICITY</scope>
    <source>
        <strain>SWR/J</strain>
        <tissue>Eye</tissue>
    </source>
</reference>
<reference key="2">
    <citation type="journal article" date="2004" name="Genome Res.">
        <title>The status, quality, and expansion of the NIH full-length cDNA project: the Mammalian Gene Collection (MGC).</title>
        <authorList>
            <consortium name="The MGC Project Team"/>
        </authorList>
    </citation>
    <scope>NUCLEOTIDE SEQUENCE [LARGE SCALE MRNA]</scope>
    <source>
        <strain>C57BL/6J</strain>
        <tissue>Olfactory epithelium</tissue>
    </source>
</reference>
<reference key="3">
    <citation type="journal article" date="2000" name="Proc. Natl. Acad. Sci. U.S.A.">
        <title>Pw1/Peg3 is a potential cell death mediator and cooperates with Siah1a in p53-mediated apoptosis.</title>
        <authorList>
            <person name="Relaix F."/>
            <person name="Wei X."/>
            <person name="Li W."/>
            <person name="Pan J."/>
            <person name="Lin Y."/>
            <person name="Bowtell D.D."/>
            <person name="Sassoon D.A."/>
            <person name="Wu X."/>
        </authorList>
    </citation>
    <scope>FUNCTION</scope>
    <scope>INTERACTION WITH PEG3</scope>
</reference>
<reference key="4">
    <citation type="journal article" date="2003" name="Biochem. Biophys. Res. Commun.">
        <title>Inhibition of ubiquitin ligase Siah-1A by disabled-1.</title>
        <authorList>
            <person name="Park T.-J."/>
            <person name="Hamanaka H."/>
            <person name="Ohshima T."/>
            <person name="Watanabe N."/>
            <person name="Mikoshiba K."/>
            <person name="Nukina N."/>
        </authorList>
    </citation>
    <scope>INTERACTION WITH DAB1</scope>
</reference>
<reference key="5">
    <citation type="journal article" date="2002" name="Mol. Cell. Biol.">
        <title>The ubiquitin ligase component Siah1a is required for completion of meiosis I in male mice.</title>
        <authorList>
            <person name="Dickins R.A."/>
            <person name="Frew I.J."/>
            <person name="House C.M."/>
            <person name="O'Bryan M.K."/>
            <person name="Holloway A.J."/>
            <person name="Haviv I."/>
            <person name="Traficante N."/>
            <person name="de Kretser D.M."/>
            <person name="Bowtell D.D.L."/>
        </authorList>
    </citation>
    <scope>FUNCTION</scope>
</reference>
<reference key="6">
    <citation type="journal article" date="2002" name="Mol. Cell. Biol.">
        <title>Normal p53 function in primary cells deficient for Siah genes.</title>
        <authorList>
            <person name="Frew I.J."/>
            <person name="Dickins R.A."/>
            <person name="Cuddihy A.R."/>
            <person name="Del Rosario M."/>
            <person name="Reinhard C."/>
            <person name="O'Connell M.J."/>
            <person name="Bowtell D.D.L."/>
        </authorList>
    </citation>
    <scope>INDUCTION</scope>
</reference>
<reference key="7">
    <citation type="journal article" date="2014" name="PLoS Genet.">
        <title>Fine tuning of the UPR by the ubiquitin ligases Siah1/2.</title>
        <authorList>
            <person name="Scortegagna M."/>
            <person name="Kim H."/>
            <person name="Li J.L."/>
            <person name="Yao H."/>
            <person name="Brill L.M."/>
            <person name="Han J."/>
            <person name="Lau E."/>
            <person name="Bowtell D."/>
            <person name="Haddad G."/>
            <person name="Kaufman R.J."/>
            <person name="Ronai Z.A."/>
        </authorList>
    </citation>
    <scope>FUNCTION</scope>
    <scope>INDUCTION</scope>
</reference>
<reference key="8">
    <citation type="journal article" date="2017" name="Genes Dev.">
        <title>The SIAH E3 ubiquitin ligases promote Wnt/beta-catenin signaling through mediating Wnt-induced Axin degradation.</title>
        <authorList>
            <person name="Ji L."/>
            <person name="Jiang B."/>
            <person name="Jiang X."/>
            <person name="Charlat O."/>
            <person name="Chen A."/>
            <person name="Mickanin C."/>
            <person name="Bauer A."/>
            <person name="Xu W."/>
            <person name="Yan X."/>
            <person name="Cong F."/>
        </authorList>
    </citation>
    <scope>FUNCTION</scope>
    <scope>CATALYTIC ACTIVITY</scope>
    <scope>PATHWAY</scope>
    <scope>MUTAGENESIS OF 176-VAL--TRP-178</scope>
</reference>
<reference key="9">
    <citation type="journal article" date="2002" name="Nat. Struct. Biol.">
        <title>Siah ubiquitin ligase is structurally related to TRAF and modulates TNF-alpha signaling.</title>
        <authorList>
            <person name="Polekhina G."/>
            <person name="House C.M."/>
            <person name="Traficante N."/>
            <person name="Mackay J.P."/>
            <person name="Relaix F."/>
            <person name="Sassoon D.A."/>
            <person name="Parker M.W."/>
            <person name="Bowtell D.D.L."/>
        </authorList>
    </citation>
    <scope>X-RAY CRYSTALLOGRAPHY (2.6 ANGSTROMS) OF 93-282 IN COMPLEX WITH ZINC</scope>
    <scope>HOMODIMERIZATION</scope>
    <scope>DOMAIN</scope>
</reference>
<reference key="10">
    <citation type="journal article" date="2006" name="Structure">
        <title>Elucidation of the substrate binding site of Siah ubiquitin ligase.</title>
        <authorList>
            <person name="House C.M."/>
            <person name="Hancock N.C."/>
            <person name="Moller A."/>
            <person name="Cromer B.A."/>
            <person name="Fedorov V."/>
            <person name="Bowtell D.D."/>
            <person name="Parker M.W."/>
            <person name="Polekhina G."/>
        </authorList>
    </citation>
    <scope>X-RAY CRYSTALLOGRAPHY (3.0 ANGSTROMS) OF 92-282 IN COMPLEX WITH ZINC AND PEPTIDE SUBSTRATE</scope>
    <scope>FUNCTION</scope>
    <scope>INTERACTION WITH KLF10</scope>
    <scope>MUTAGENESIS OF THR-156; LEU-158; LEU-166 AND MET-180</scope>
</reference>
<evidence type="ECO:0000250" key="1">
    <source>
        <dbReference type="UniProtKB" id="Q8IUQ4"/>
    </source>
</evidence>
<evidence type="ECO:0000250" key="2">
    <source>
        <dbReference type="UniProtKB" id="Q920M9"/>
    </source>
</evidence>
<evidence type="ECO:0000255" key="3">
    <source>
        <dbReference type="PROSITE-ProRule" id="PRU00175"/>
    </source>
</evidence>
<evidence type="ECO:0000255" key="4">
    <source>
        <dbReference type="PROSITE-ProRule" id="PRU00455"/>
    </source>
</evidence>
<evidence type="ECO:0000256" key="5">
    <source>
        <dbReference type="SAM" id="MobiDB-lite"/>
    </source>
</evidence>
<evidence type="ECO:0000269" key="6">
    <source>
    </source>
</evidence>
<evidence type="ECO:0000269" key="7">
    <source>
    </source>
</evidence>
<evidence type="ECO:0000269" key="8">
    <source>
    </source>
</evidence>
<evidence type="ECO:0000269" key="9">
    <source>
    </source>
</evidence>
<evidence type="ECO:0000269" key="10">
    <source>
    </source>
</evidence>
<evidence type="ECO:0000269" key="11">
    <source>
    </source>
</evidence>
<evidence type="ECO:0000269" key="12">
    <source>
    </source>
</evidence>
<evidence type="ECO:0000269" key="13">
    <source>
    </source>
</evidence>
<evidence type="ECO:0000269" key="14">
    <source>
    </source>
</evidence>
<evidence type="ECO:0000305" key="15"/>
<evidence type="ECO:0007829" key="16">
    <source>
        <dbReference type="PDB" id="1K2F"/>
    </source>
</evidence>
<proteinExistence type="evidence at protein level"/>
<comment type="function">
    <text evidence="1 2 6 8 12 13">E3 ubiquitin-protein ligase that mediates ubiquitination and subsequent proteasomal degradation of target proteins. E3 ubiquitin ligases accept ubiquitin from an E2 ubiquitin-conjugating enzyme in the form of a thioester and then directly transfers the ubiquitin to targeted substrates. Mediates E3 ubiquitin ligase activity either through direct binding to substrates or by functioning as the essential RING domain subunit of larger E3 complexes. Triggers the ubiquitin-mediated degradation of many substrates, including proteins involved in transcription regulation (ELL2, MYB, POU2AF1, PML and RBBP8), a cell surface receptor (DCC), the cell-surface receptor-type tyrosine kinase FLT3, the cytoplasmic signal transduction molecules (KLF10/TIEG1 and NUMB), an antiapoptotic protein (BAG1), a microtubule motor protein (KIF22), a protein involved in synaptic vesicle function in neurons (SYP), a structural protein (CTNNB1) and SNCAIP. Confers constitutive instability to HIPK2 through proteasomal degradation. It is thereby involved in many cellular processes such as apoptosis, tumor suppression, cell cycle, axon guidance, transcription regulation, spermatogenesis and TNF-alpha signaling. Has some overlapping function with SIAH2 (By similarity). Required for completion of meiosis I in males (PubMed:11884614). Induces apoptosis in cooperation with PEG3 (PubMed:10681424). Upon nitric oxid (NO) generation that follows apoptotic stimulation, interacts with S-nitrosylated GAPDH, mediating the translocation of GAPDH to the nucleus. GAPDH acts as a stabilizer of SIAH1, facilitating the degradation of nuclear proteins (By similarity). Mediates ubiquitination and degradation of EGLN2 and EGLN3 in response to the unfolded protein response (UPR), leading to their degradation and subsequent stabilization of ATF4 (PubMed:24809345). Also part of the Wnt signaling pathway in which it mediates the Wnt-induced ubiquitin-mediated proteasomal degradation of AXIN1.</text>
</comment>
<comment type="catalytic activity">
    <reaction evidence="13">
        <text>S-ubiquitinyl-[E2 ubiquitin-conjugating enzyme]-L-cysteine + [acceptor protein]-L-lysine = [E2 ubiquitin-conjugating enzyme]-L-cysteine + N(6)-ubiquitinyl-[acceptor protein]-L-lysine.</text>
        <dbReference type="EC" id="2.3.2.27"/>
    </reaction>
</comment>
<comment type="pathway">
    <text evidence="13">Protein modification; protein ubiquitination.</text>
</comment>
<comment type="subunit">
    <text evidence="1 2 6 7 10 11">Homodimer. Component of some large E3 complex composed of UBE2D1, SIAH1, CACYBP/SIP, SKP1, APC and TBL1X. Interacts with UBE2I. Interacts with alpha-tubulin. Interacts with PEG10, which may inhibit its activity. Interacts with PEG3 (By similarity). Interacts with group 1 glutamate receptors GRM1 and GRM5. Interacts with DAB1, which may inhibit its activity. Interacts with UBE2E2. Interacts with SNCAIP. Interacts with KHDRBS3. Interacts with SNCAIP. Interacts with HIPK2; the interaction is promoted by DAZAP2 and results in SIAH1-mediated ubiquitination and subsequent proteasomal degradation of HIPK2 (By similarity). Interacts with DAZAP2; the interaction is decreased following phosphorylation of DAZAP2 by HIPK2 (By similarity). Interacts with GAPDH; leading to stabilize SIAH1. Interacts with Bassoon/BSN and Piccolo/PLCO; these interactions negatively regulate SIAH1 E3 ligase activity. Interacts with DCC (By similarity). Interacts with AXIN1; catalyzes AXIN1 ubiquitination and subsequent proteasome-mediated ubiquitin-dependent degradation.</text>
</comment>
<comment type="interaction">
    <interactant intactId="EBI-446761">
        <id>P61092</id>
    </interactant>
    <interactant intactId="EBI-81680">
        <id>P97318</id>
        <label>Dab1</label>
    </interactant>
    <organismsDiffer>false</organismsDiffer>
    <experiments>3</experiments>
</comment>
<comment type="interaction">
    <interactant intactId="EBI-446761">
        <id>P61092</id>
    </interactant>
    <interactant intactId="EBI-77033">
        <id>Q27934</id>
        <label>phyl</label>
    </interactant>
    <organismsDiffer>true</organismsDiffer>
    <experiments>2</experiments>
</comment>
<comment type="subcellular location">
    <subcellularLocation>
        <location>Cytoplasm</location>
    </subcellularLocation>
    <subcellularLocation>
        <location>Nucleus</location>
    </subcellularLocation>
    <text>Predominantly cytoplasmic. Partially nuclear.</text>
</comment>
<comment type="tissue specificity">
    <text evidence="14">Widely expressed at low level in embryos and adults. Expressed at higher level in testis. Due to the high similarity between SIAH1A and SIAH1B, it is difficult to distinguish its own tissue specificity.</text>
</comment>
<comment type="induction">
    <text evidence="9 12">May be induced by p53/TP53, suggesting that it may be required to modulate p53/TP53 response (PubMed:12417719). The relevance of such activity in vivo is however unclear and may not exist (PubMed:12417719). Induced by ATF4 in response to the unfolded protein response (UPR) (PubMed:24809345).</text>
</comment>
<comment type="domain">
    <text>The RING-type zinc finger domain is essential for ubiquitin ligase activity.</text>
</comment>
<comment type="domain">
    <text evidence="7">The SBD domain (substrate-binding domain) mediates the homodimerization and the interaction with substrate proteins. It is related to the TRAF family.</text>
</comment>
<comment type="PTM">
    <text evidence="1">Phosphorylated on Ser-19 by ATM and ATR. This phosphorylation disrupts SIAH1 interaction with HIPK2, and subsequent proteasomal degradation of HIPK2 (By similarity).</text>
</comment>
<comment type="similarity">
    <text evidence="15">Belongs to the SINA (Seven in absentia) family.</text>
</comment>
<name>SIA1A_MOUSE</name>
<organism>
    <name type="scientific">Mus musculus</name>
    <name type="common">Mouse</name>
    <dbReference type="NCBI Taxonomy" id="10090"/>
    <lineage>
        <taxon>Eukaryota</taxon>
        <taxon>Metazoa</taxon>
        <taxon>Chordata</taxon>
        <taxon>Craniata</taxon>
        <taxon>Vertebrata</taxon>
        <taxon>Euteleostomi</taxon>
        <taxon>Mammalia</taxon>
        <taxon>Eutheria</taxon>
        <taxon>Euarchontoglires</taxon>
        <taxon>Glires</taxon>
        <taxon>Rodentia</taxon>
        <taxon>Myomorpha</taxon>
        <taxon>Muroidea</taxon>
        <taxon>Muridae</taxon>
        <taxon>Murinae</taxon>
        <taxon>Mus</taxon>
        <taxon>Mus</taxon>
    </lineage>
</organism>
<protein>
    <recommendedName>
        <fullName>E3 ubiquitin-protein ligase SIAH1A</fullName>
        <ecNumber evidence="13">2.3.2.27</ecNumber>
    </recommendedName>
    <alternativeName>
        <fullName evidence="15">RING-type E3 ubiquitin transferase SIAH1A</fullName>
    </alternativeName>
    <alternativeName>
        <fullName>Seven in absentia homolog 1a</fullName>
        <shortName>Siah-1a</shortName>
        <shortName>Siah1a</shortName>
        <shortName>mSiah-1a</shortName>
    </alternativeName>
</protein>
<keyword id="KW-0002">3D-structure</keyword>
<keyword id="KW-0053">Apoptosis</keyword>
<keyword id="KW-0131">Cell cycle</keyword>
<keyword id="KW-0963">Cytoplasm</keyword>
<keyword id="KW-0217">Developmental protein</keyword>
<keyword id="KW-0221">Differentiation</keyword>
<keyword id="KW-0479">Metal-binding</keyword>
<keyword id="KW-0539">Nucleus</keyword>
<keyword id="KW-0597">Phosphoprotein</keyword>
<keyword id="KW-1185">Reference proteome</keyword>
<keyword id="KW-0744">Spermatogenesis</keyword>
<keyword id="KW-0808">Transferase</keyword>
<keyword id="KW-0833">Ubl conjugation pathway</keyword>
<keyword id="KW-0862">Zinc</keyword>
<keyword id="KW-0863">Zinc-finger</keyword>
<dbReference type="EC" id="2.3.2.27" evidence="13"/>
<dbReference type="EMBL" id="Z19579">
    <property type="protein sequence ID" value="CAA79630.1"/>
    <property type="molecule type" value="mRNA"/>
</dbReference>
<dbReference type="EMBL" id="BC046317">
    <property type="protein sequence ID" value="AAH46317.1"/>
    <property type="molecule type" value="mRNA"/>
</dbReference>
<dbReference type="CCDS" id="CCDS22504.1"/>
<dbReference type="PIR" id="I48763">
    <property type="entry name" value="I48763"/>
</dbReference>
<dbReference type="RefSeq" id="NP_033198.1">
    <property type="nucleotide sequence ID" value="NM_009172.2"/>
</dbReference>
<dbReference type="RefSeq" id="XP_006530847.2">
    <property type="nucleotide sequence ID" value="XM_006530784.3"/>
</dbReference>
<dbReference type="PDB" id="1K2F">
    <property type="method" value="X-ray"/>
    <property type="resolution" value="2.60 A"/>
    <property type="chains" value="A/B=93-282"/>
</dbReference>
<dbReference type="PDB" id="2AN6">
    <property type="method" value="X-ray"/>
    <property type="resolution" value="3.00 A"/>
    <property type="chains" value="A/B/C/D=92-282"/>
</dbReference>
<dbReference type="PDBsum" id="1K2F"/>
<dbReference type="PDBsum" id="2AN6"/>
<dbReference type="SMR" id="P61092"/>
<dbReference type="BioGRID" id="203231">
    <property type="interactions" value="8"/>
</dbReference>
<dbReference type="DIP" id="DIP-29100N"/>
<dbReference type="FunCoup" id="P61092">
    <property type="interactions" value="3503"/>
</dbReference>
<dbReference type="IntAct" id="P61092">
    <property type="interactions" value="4"/>
</dbReference>
<dbReference type="STRING" id="10090.ENSMUSP00000044123"/>
<dbReference type="PhosphoSitePlus" id="P61092"/>
<dbReference type="PaxDb" id="10090-ENSMUSP00000044123"/>
<dbReference type="ProteomicsDB" id="257230"/>
<dbReference type="Pumba" id="P61092"/>
<dbReference type="DNASU" id="20437"/>
<dbReference type="Ensembl" id="ENSMUST00000045296.6">
    <property type="protein sequence ID" value="ENSMUSP00000044123.5"/>
    <property type="gene ID" value="ENSMUSG00000036840.6"/>
</dbReference>
<dbReference type="GeneID" id="20437"/>
<dbReference type="KEGG" id="mmu:20437"/>
<dbReference type="UCSC" id="uc009mqn.2">
    <property type="organism name" value="mouse"/>
</dbReference>
<dbReference type="AGR" id="MGI:108064"/>
<dbReference type="CTD" id="20437"/>
<dbReference type="MGI" id="MGI:108064">
    <property type="gene designation" value="Siah1a"/>
</dbReference>
<dbReference type="VEuPathDB" id="HostDB:ENSMUSG00000036840"/>
<dbReference type="eggNOG" id="KOG3002">
    <property type="taxonomic scope" value="Eukaryota"/>
</dbReference>
<dbReference type="GeneTree" id="ENSGT00940000154837"/>
<dbReference type="HOGENOM" id="CLU_028215_0_0_1"/>
<dbReference type="InParanoid" id="P61092"/>
<dbReference type="OMA" id="HSNTGCT"/>
<dbReference type="OrthoDB" id="941555at2759"/>
<dbReference type="PhylomeDB" id="P61092"/>
<dbReference type="TreeFam" id="TF312976"/>
<dbReference type="Reactome" id="R-MMU-983168">
    <property type="pathway name" value="Antigen processing: Ubiquitination &amp; Proteasome degradation"/>
</dbReference>
<dbReference type="UniPathway" id="UPA00143"/>
<dbReference type="BioGRID-ORCS" id="20437">
    <property type="hits" value="6 hits in 77 CRISPR screens"/>
</dbReference>
<dbReference type="ChiTaRS" id="Siah1a">
    <property type="organism name" value="mouse"/>
</dbReference>
<dbReference type="EvolutionaryTrace" id="P61092"/>
<dbReference type="PRO" id="PR:P61092"/>
<dbReference type="Proteomes" id="UP000000589">
    <property type="component" value="Chromosome 8"/>
</dbReference>
<dbReference type="RNAct" id="P61092">
    <property type="molecule type" value="protein"/>
</dbReference>
<dbReference type="Bgee" id="ENSMUSG00000036840">
    <property type="expression patterns" value="Expressed in secondary oocyte and 251 other cell types or tissues"/>
</dbReference>
<dbReference type="GO" id="GO:0005829">
    <property type="term" value="C:cytosol"/>
    <property type="evidence" value="ECO:0000250"/>
    <property type="project" value="UniProtKB"/>
</dbReference>
<dbReference type="GO" id="GO:0005634">
    <property type="term" value="C:nucleus"/>
    <property type="evidence" value="ECO:0000250"/>
    <property type="project" value="UniProtKB"/>
</dbReference>
<dbReference type="GO" id="GO:0019005">
    <property type="term" value="C:SCF ubiquitin ligase complex"/>
    <property type="evidence" value="ECO:0000315"/>
    <property type="project" value="CAFA"/>
</dbReference>
<dbReference type="GO" id="GO:0097718">
    <property type="term" value="F:disordered domain specific binding"/>
    <property type="evidence" value="ECO:0000353"/>
    <property type="project" value="CAFA"/>
</dbReference>
<dbReference type="GO" id="GO:0042803">
    <property type="term" value="F:protein homodimerization activity"/>
    <property type="evidence" value="ECO:0000353"/>
    <property type="project" value="UniProtKB"/>
</dbReference>
<dbReference type="GO" id="GO:0061630">
    <property type="term" value="F:ubiquitin protein ligase activity"/>
    <property type="evidence" value="ECO:0000315"/>
    <property type="project" value="UniProtKB"/>
</dbReference>
<dbReference type="GO" id="GO:0004842">
    <property type="term" value="F:ubiquitin-protein transferase activity"/>
    <property type="evidence" value="ECO:0000314"/>
    <property type="project" value="UniProtKB"/>
</dbReference>
<dbReference type="GO" id="GO:0008270">
    <property type="term" value="F:zinc ion binding"/>
    <property type="evidence" value="ECO:0000314"/>
    <property type="project" value="UniProtKB"/>
</dbReference>
<dbReference type="GO" id="GO:0060070">
    <property type="term" value="P:canonical Wnt signaling pathway"/>
    <property type="evidence" value="ECO:0000315"/>
    <property type="project" value="UniProtKB"/>
</dbReference>
<dbReference type="GO" id="GO:0030154">
    <property type="term" value="P:cell differentiation"/>
    <property type="evidence" value="ECO:0007669"/>
    <property type="project" value="UniProtKB-KW"/>
</dbReference>
<dbReference type="GO" id="GO:0007141">
    <property type="term" value="P:male meiosis I"/>
    <property type="evidence" value="ECO:0000315"/>
    <property type="project" value="MGI"/>
</dbReference>
<dbReference type="GO" id="GO:0051402">
    <property type="term" value="P:neuron apoptotic process"/>
    <property type="evidence" value="ECO:0000250"/>
    <property type="project" value="UniProtKB"/>
</dbReference>
<dbReference type="GO" id="GO:0009791">
    <property type="term" value="P:post-embryonic development"/>
    <property type="evidence" value="ECO:0000315"/>
    <property type="project" value="MGI"/>
</dbReference>
<dbReference type="GO" id="GO:0043161">
    <property type="term" value="P:proteasome-mediated ubiquitin-dependent protein catabolic process"/>
    <property type="evidence" value="ECO:0000314"/>
    <property type="project" value="UniProtKB"/>
</dbReference>
<dbReference type="GO" id="GO:0016567">
    <property type="term" value="P:protein ubiquitination"/>
    <property type="evidence" value="ECO:0007669"/>
    <property type="project" value="UniProtKB-UniPathway"/>
</dbReference>
<dbReference type="GO" id="GO:0040014">
    <property type="term" value="P:regulation of multicellular organism growth"/>
    <property type="evidence" value="ECO:0000315"/>
    <property type="project" value="MGI"/>
</dbReference>
<dbReference type="GO" id="GO:0007283">
    <property type="term" value="P:spermatogenesis"/>
    <property type="evidence" value="ECO:0000315"/>
    <property type="project" value="MGI"/>
</dbReference>
<dbReference type="GO" id="GO:0006511">
    <property type="term" value="P:ubiquitin-dependent protein catabolic process"/>
    <property type="evidence" value="ECO:0000314"/>
    <property type="project" value="UniProtKB"/>
</dbReference>
<dbReference type="CDD" id="cd03829">
    <property type="entry name" value="Sina"/>
    <property type="match status" value="1"/>
</dbReference>
<dbReference type="FunFam" id="2.60.210.10:FF:000002">
    <property type="entry name" value="E3 ubiquitin-protein ligase"/>
    <property type="match status" value="1"/>
</dbReference>
<dbReference type="FunFam" id="3.30.160.60:FF:000665">
    <property type="entry name" value="E3 ubiquitin-protein ligase"/>
    <property type="match status" value="1"/>
</dbReference>
<dbReference type="FunFam" id="3.30.40.10:FF:000050">
    <property type="entry name" value="E3 ubiquitin-protein ligase"/>
    <property type="match status" value="1"/>
</dbReference>
<dbReference type="FunFam" id="3.30.40.10:FF:000063">
    <property type="entry name" value="E3 ubiquitin-protein ligase"/>
    <property type="match status" value="1"/>
</dbReference>
<dbReference type="Gene3D" id="2.60.210.10">
    <property type="entry name" value="Apoptosis, Tumor Necrosis Factor Receptor Associated Protein 2, Chain A"/>
    <property type="match status" value="1"/>
</dbReference>
<dbReference type="Gene3D" id="3.30.40.10">
    <property type="entry name" value="Zinc/RING finger domain, C3HC4 (zinc finger)"/>
    <property type="match status" value="2"/>
</dbReference>
<dbReference type="InterPro" id="IPR018121">
    <property type="entry name" value="7-in-absentia-prot_TRAF-dom"/>
</dbReference>
<dbReference type="InterPro" id="IPR004162">
    <property type="entry name" value="SINA-like_animal"/>
</dbReference>
<dbReference type="InterPro" id="IPR049548">
    <property type="entry name" value="Sina-like_RING"/>
</dbReference>
<dbReference type="InterPro" id="IPR008974">
    <property type="entry name" value="TRAF-like"/>
</dbReference>
<dbReference type="InterPro" id="IPR001841">
    <property type="entry name" value="Znf_RING"/>
</dbReference>
<dbReference type="InterPro" id="IPR013083">
    <property type="entry name" value="Znf_RING/FYVE/PHD"/>
</dbReference>
<dbReference type="InterPro" id="IPR013010">
    <property type="entry name" value="Znf_SIAH"/>
</dbReference>
<dbReference type="PANTHER" id="PTHR45877:SF7">
    <property type="entry name" value="E3 UBIQUITIN-PROTEIN LIGASE SIAH1"/>
    <property type="match status" value="1"/>
</dbReference>
<dbReference type="PANTHER" id="PTHR45877">
    <property type="entry name" value="E3 UBIQUITIN-PROTEIN LIGASE SIAH2"/>
    <property type="match status" value="1"/>
</dbReference>
<dbReference type="Pfam" id="PF21362">
    <property type="entry name" value="Sina_RING"/>
    <property type="match status" value="1"/>
</dbReference>
<dbReference type="Pfam" id="PF03145">
    <property type="entry name" value="Sina_TRAF"/>
    <property type="match status" value="1"/>
</dbReference>
<dbReference type="Pfam" id="PF21361">
    <property type="entry name" value="Sina_ZnF"/>
    <property type="match status" value="1"/>
</dbReference>
<dbReference type="SUPFAM" id="SSF57850">
    <property type="entry name" value="RING/U-box"/>
    <property type="match status" value="1"/>
</dbReference>
<dbReference type="SUPFAM" id="SSF49599">
    <property type="entry name" value="TRAF domain-like"/>
    <property type="match status" value="1"/>
</dbReference>
<dbReference type="PROSITE" id="PS50089">
    <property type="entry name" value="ZF_RING_2"/>
    <property type="match status" value="1"/>
</dbReference>
<dbReference type="PROSITE" id="PS51081">
    <property type="entry name" value="ZF_SIAH"/>
    <property type="match status" value="1"/>
</dbReference>
<feature type="chain" id="PRO_0000056164" description="E3 ubiquitin-protein ligase SIAH1A">
    <location>
        <begin position="1"/>
        <end position="282"/>
    </location>
</feature>
<feature type="zinc finger region" description="RING-type" evidence="3">
    <location>
        <begin position="41"/>
        <end position="76"/>
    </location>
</feature>
<feature type="zinc finger region" description="SIAH-type" evidence="4">
    <location>
        <begin position="93"/>
        <end position="153"/>
    </location>
</feature>
<feature type="region of interest" description="Disordered" evidence="5">
    <location>
        <begin position="1"/>
        <end position="22"/>
    </location>
</feature>
<feature type="region of interest" description="SBD" evidence="7">
    <location>
        <begin position="90"/>
        <end position="282"/>
    </location>
</feature>
<feature type="compositionally biased region" description="Polar residues" evidence="5">
    <location>
        <begin position="1"/>
        <end position="17"/>
    </location>
</feature>
<feature type="binding site" evidence="7 11">
    <location>
        <position position="98"/>
    </location>
    <ligand>
        <name>Zn(2+)</name>
        <dbReference type="ChEBI" id="CHEBI:29105"/>
        <label>1</label>
    </ligand>
</feature>
<feature type="binding site" evidence="7 11">
    <location>
        <position position="105"/>
    </location>
    <ligand>
        <name>Zn(2+)</name>
        <dbReference type="ChEBI" id="CHEBI:29105"/>
        <label>1</label>
    </ligand>
</feature>
<feature type="binding site" evidence="7 11">
    <location>
        <position position="117"/>
    </location>
    <ligand>
        <name>Zn(2+)</name>
        <dbReference type="ChEBI" id="CHEBI:29105"/>
        <label>1</label>
    </ligand>
</feature>
<feature type="binding site" evidence="7 11">
    <location>
        <position position="121"/>
    </location>
    <ligand>
        <name>Zn(2+)</name>
        <dbReference type="ChEBI" id="CHEBI:29105"/>
        <label>1</label>
    </ligand>
</feature>
<feature type="binding site" evidence="7 11">
    <location>
        <position position="128"/>
    </location>
    <ligand>
        <name>Zn(2+)</name>
        <dbReference type="ChEBI" id="CHEBI:29105"/>
        <label>2</label>
    </ligand>
</feature>
<feature type="binding site" evidence="7 11">
    <location>
        <position position="135"/>
    </location>
    <ligand>
        <name>Zn(2+)</name>
        <dbReference type="ChEBI" id="CHEBI:29105"/>
        <label>2</label>
    </ligand>
</feature>
<feature type="binding site" evidence="7 11">
    <location>
        <position position="147"/>
    </location>
    <ligand>
        <name>Zn(2+)</name>
        <dbReference type="ChEBI" id="CHEBI:29105"/>
        <label>2</label>
    </ligand>
</feature>
<feature type="binding site" evidence="7 11">
    <location>
        <position position="152"/>
    </location>
    <ligand>
        <name>Zn(2+)</name>
        <dbReference type="ChEBI" id="CHEBI:29105"/>
        <label>2</label>
    </ligand>
</feature>
<feature type="modified residue" description="Phosphoserine; by ATM and ATR" evidence="1">
    <location>
        <position position="19"/>
    </location>
</feature>
<feature type="mutagenesis site" description="Strongly reduced binding and degradation of target proteins; when associated with D-158." evidence="11">
    <original>T</original>
    <variation>E</variation>
    <location>
        <position position="156"/>
    </location>
</feature>
<feature type="mutagenesis site" description="Strongly reduced binding of target proteins. Strongly reduced degradation of target proteins." evidence="11">
    <original>L</original>
    <variation>D</variation>
    <variation>K</variation>
    <location>
        <position position="158"/>
    </location>
</feature>
<feature type="mutagenesis site" description="Minor effect on binding and degradation of target proteins." evidence="11">
    <original>L</original>
    <variation>K</variation>
    <location>
        <position position="166"/>
    </location>
</feature>
<feature type="mutagenesis site" description="Loss of interaction with AXIN1. Loss of function in AXIN1 degradation. Loss of function in Wnt signaling." evidence="13">
    <original>VDW</original>
    <variation>AAA</variation>
    <location>
        <begin position="176"/>
        <end position="178"/>
    </location>
</feature>
<feature type="mutagenesis site" description="Strongly reduced binding of target proteins. Strongly reduced degradation of target proteins." evidence="11">
    <original>M</original>
    <variation>K</variation>
    <location>
        <position position="180"/>
    </location>
</feature>
<feature type="helix" evidence="16">
    <location>
        <begin position="101"/>
        <end position="103"/>
    </location>
</feature>
<feature type="helix" evidence="16">
    <location>
        <begin position="111"/>
        <end position="113"/>
    </location>
</feature>
<feature type="helix" evidence="16">
    <location>
        <begin position="114"/>
        <end position="119"/>
    </location>
</feature>
<feature type="strand" evidence="16">
    <location>
        <begin position="130"/>
        <end position="132"/>
    </location>
</feature>
<feature type="helix" evidence="16">
    <location>
        <begin position="141"/>
        <end position="143"/>
    </location>
</feature>
<feature type="helix" evidence="16">
    <location>
        <begin position="144"/>
        <end position="150"/>
    </location>
</feature>
<feature type="strand" evidence="16">
    <location>
        <begin position="156"/>
        <end position="167"/>
    </location>
</feature>
<feature type="strand" evidence="16">
    <location>
        <begin position="177"/>
        <end position="184"/>
    </location>
</feature>
<feature type="strand" evidence="16">
    <location>
        <begin position="187"/>
        <end position="198"/>
    </location>
</feature>
<feature type="turn" evidence="16">
    <location>
        <begin position="199"/>
        <end position="201"/>
    </location>
</feature>
<feature type="strand" evidence="16">
    <location>
        <begin position="202"/>
        <end position="213"/>
    </location>
</feature>
<feature type="helix" evidence="16">
    <location>
        <begin position="215"/>
        <end position="218"/>
    </location>
</feature>
<feature type="strand" evidence="16">
    <location>
        <begin position="221"/>
        <end position="229"/>
    </location>
</feature>
<feature type="strand" evidence="16">
    <location>
        <begin position="232"/>
        <end position="238"/>
    </location>
</feature>
<feature type="turn" evidence="16">
    <location>
        <begin position="243"/>
        <end position="245"/>
    </location>
</feature>
<feature type="helix" evidence="16">
    <location>
        <begin position="248"/>
        <end position="252"/>
    </location>
</feature>
<feature type="strand" evidence="16">
    <location>
        <begin position="256"/>
        <end position="260"/>
    </location>
</feature>
<feature type="helix" evidence="16">
    <location>
        <begin position="261"/>
        <end position="267"/>
    </location>
</feature>
<feature type="strand" evidence="16">
    <location>
        <begin position="272"/>
        <end position="281"/>
    </location>
</feature>
<sequence length="282" mass="31137">MSRQTATALPTGTSKCPPSQRVPALTGTTASNNDLASLFECPVCFDYVLPPILQCQSGHLVCSNCRPKLTCCPTCRGPLGSIRNLAMEKVANSVLFPCKYASSGCEITLPHTEKAEHEELCEFRPYSCPCPGASCKWQGSLDAVMPHLMHQHKSITTLQGEDIVFLATDINLPGAVDWVMMQSCFGFHFMLVLEKQEKYDGHQQFFAIVQLIGTRKQAENFAYRLELNGHRRRLTWEATPRSIHEGIATAIMNSDCLVFDTSIAQLFAENGNLGINVTISMC</sequence>
<gene>
    <name type="primary">Siah1a</name>
</gene>
<accession>P61092</accession>
<accession>Q06984</accession>